<name>RS7_BUCAT</name>
<dbReference type="EMBL" id="CP001158">
    <property type="protein sequence ID" value="ACL30318.1"/>
    <property type="molecule type" value="Genomic_DNA"/>
</dbReference>
<dbReference type="RefSeq" id="WP_009874479.1">
    <property type="nucleotide sequence ID" value="NC_011834.1"/>
</dbReference>
<dbReference type="SMR" id="B8D853"/>
<dbReference type="KEGG" id="bau:BUAPTUC7_522"/>
<dbReference type="HOGENOM" id="CLU_072226_1_1_6"/>
<dbReference type="GO" id="GO:0015935">
    <property type="term" value="C:small ribosomal subunit"/>
    <property type="evidence" value="ECO:0007669"/>
    <property type="project" value="InterPro"/>
</dbReference>
<dbReference type="GO" id="GO:0019843">
    <property type="term" value="F:rRNA binding"/>
    <property type="evidence" value="ECO:0007669"/>
    <property type="project" value="UniProtKB-UniRule"/>
</dbReference>
<dbReference type="GO" id="GO:0003735">
    <property type="term" value="F:structural constituent of ribosome"/>
    <property type="evidence" value="ECO:0007669"/>
    <property type="project" value="InterPro"/>
</dbReference>
<dbReference type="GO" id="GO:0000049">
    <property type="term" value="F:tRNA binding"/>
    <property type="evidence" value="ECO:0007669"/>
    <property type="project" value="UniProtKB-UniRule"/>
</dbReference>
<dbReference type="GO" id="GO:0006412">
    <property type="term" value="P:translation"/>
    <property type="evidence" value="ECO:0007669"/>
    <property type="project" value="UniProtKB-UniRule"/>
</dbReference>
<dbReference type="CDD" id="cd14869">
    <property type="entry name" value="uS7_Bacteria"/>
    <property type="match status" value="1"/>
</dbReference>
<dbReference type="FunFam" id="1.10.455.10:FF:000001">
    <property type="entry name" value="30S ribosomal protein S7"/>
    <property type="match status" value="1"/>
</dbReference>
<dbReference type="Gene3D" id="1.10.455.10">
    <property type="entry name" value="Ribosomal protein S7 domain"/>
    <property type="match status" value="1"/>
</dbReference>
<dbReference type="HAMAP" id="MF_00480_B">
    <property type="entry name" value="Ribosomal_uS7_B"/>
    <property type="match status" value="1"/>
</dbReference>
<dbReference type="InterPro" id="IPR000235">
    <property type="entry name" value="Ribosomal_uS7"/>
</dbReference>
<dbReference type="InterPro" id="IPR005717">
    <property type="entry name" value="Ribosomal_uS7_bac/org-type"/>
</dbReference>
<dbReference type="InterPro" id="IPR020606">
    <property type="entry name" value="Ribosomal_uS7_CS"/>
</dbReference>
<dbReference type="InterPro" id="IPR023798">
    <property type="entry name" value="Ribosomal_uS7_dom"/>
</dbReference>
<dbReference type="InterPro" id="IPR036823">
    <property type="entry name" value="Ribosomal_uS7_dom_sf"/>
</dbReference>
<dbReference type="NCBIfam" id="TIGR01029">
    <property type="entry name" value="rpsG_bact"/>
    <property type="match status" value="1"/>
</dbReference>
<dbReference type="PANTHER" id="PTHR11205">
    <property type="entry name" value="RIBOSOMAL PROTEIN S7"/>
    <property type="match status" value="1"/>
</dbReference>
<dbReference type="Pfam" id="PF00177">
    <property type="entry name" value="Ribosomal_S7"/>
    <property type="match status" value="1"/>
</dbReference>
<dbReference type="PIRSF" id="PIRSF002122">
    <property type="entry name" value="RPS7p_RPS7a_RPS5e_RPS7o"/>
    <property type="match status" value="1"/>
</dbReference>
<dbReference type="SUPFAM" id="SSF47973">
    <property type="entry name" value="Ribosomal protein S7"/>
    <property type="match status" value="1"/>
</dbReference>
<dbReference type="PROSITE" id="PS00052">
    <property type="entry name" value="RIBOSOMAL_S7"/>
    <property type="match status" value="1"/>
</dbReference>
<comment type="function">
    <text evidence="1">One of the primary rRNA binding proteins, it binds directly to 16S rRNA where it nucleates assembly of the head domain of the 30S subunit. Is located at the subunit interface close to the decoding center, probably blocks exit of the E-site tRNA.</text>
</comment>
<comment type="subunit">
    <text evidence="1">Part of the 30S ribosomal subunit. Contacts proteins S9 and S11.</text>
</comment>
<comment type="similarity">
    <text evidence="1">Belongs to the universal ribosomal protein uS7 family.</text>
</comment>
<sequence length="156" mass="18065">MPRRRIIGTRKILPDPKFSSELLAKFINILMIDGKKSIAEVIVYTALKNLSKRTDKKELEAFEIALENVRPTVEVKSRRVGGSTYQVPVEVRPVRRNALAMRWIVESARKRVDKSMSLRLSNELYDALENKGTAVKKREEVHRMAEANKAFAHYRW</sequence>
<accession>B8D853</accession>
<evidence type="ECO:0000255" key="1">
    <source>
        <dbReference type="HAMAP-Rule" id="MF_00480"/>
    </source>
</evidence>
<evidence type="ECO:0000305" key="2"/>
<feature type="chain" id="PRO_1000135587" description="Small ribosomal subunit protein uS7">
    <location>
        <begin position="1"/>
        <end position="156"/>
    </location>
</feature>
<reference key="1">
    <citation type="journal article" date="2009" name="Science">
        <title>The dynamics and time scale of ongoing genomic erosion in symbiotic bacteria.</title>
        <authorList>
            <person name="Moran N.A."/>
            <person name="McLaughlin H.J."/>
            <person name="Sorek R."/>
        </authorList>
    </citation>
    <scope>NUCLEOTIDE SEQUENCE [LARGE SCALE GENOMIC DNA]</scope>
    <source>
        <strain>Tuc7</strain>
    </source>
</reference>
<proteinExistence type="inferred from homology"/>
<gene>
    <name evidence="1" type="primary">rpsG</name>
    <name type="ordered locus">BUAPTUC7_522</name>
</gene>
<organism>
    <name type="scientific">Buchnera aphidicola subsp. Acyrthosiphon pisum (strain Tuc7)</name>
    <dbReference type="NCBI Taxonomy" id="561501"/>
    <lineage>
        <taxon>Bacteria</taxon>
        <taxon>Pseudomonadati</taxon>
        <taxon>Pseudomonadota</taxon>
        <taxon>Gammaproteobacteria</taxon>
        <taxon>Enterobacterales</taxon>
        <taxon>Erwiniaceae</taxon>
        <taxon>Buchnera</taxon>
    </lineage>
</organism>
<protein>
    <recommendedName>
        <fullName evidence="1">Small ribosomal subunit protein uS7</fullName>
    </recommendedName>
    <alternativeName>
        <fullName evidence="2">30S ribosomal protein S7</fullName>
    </alternativeName>
</protein>
<keyword id="KW-0687">Ribonucleoprotein</keyword>
<keyword id="KW-0689">Ribosomal protein</keyword>
<keyword id="KW-0694">RNA-binding</keyword>
<keyword id="KW-0699">rRNA-binding</keyword>
<keyword id="KW-0820">tRNA-binding</keyword>